<name>CPXT4_GLOVI</name>
<keyword id="KW-0456">Lyase</keyword>
<keyword id="KW-1185">Reference proteome</keyword>
<organism>
    <name type="scientific">Gloeobacter violaceus (strain ATCC 29082 / PCC 7421)</name>
    <dbReference type="NCBI Taxonomy" id="251221"/>
    <lineage>
        <taxon>Bacteria</taxon>
        <taxon>Bacillati</taxon>
        <taxon>Cyanobacteriota</taxon>
        <taxon>Cyanophyceae</taxon>
        <taxon>Gloeobacterales</taxon>
        <taxon>Gloeobacteraceae</taxon>
        <taxon>Gloeobacter</taxon>
    </lineage>
</organism>
<feature type="chain" id="PRO_0000403156" description="Chromophore lyase CpcT/CpeT 4">
    <location>
        <begin position="1"/>
        <end position="183"/>
    </location>
</feature>
<comment type="function">
    <text evidence="1">Covalently attaches a chromophore to Cys residue(s) of phycobiliproteins.</text>
</comment>
<comment type="similarity">
    <text evidence="1">Belongs to the CpcT/CpeT biliprotein lyase family.</text>
</comment>
<accession>Q7NKE0</accession>
<proteinExistence type="inferred from homology"/>
<protein>
    <recommendedName>
        <fullName evidence="1">Chromophore lyase CpcT/CpeT 4</fullName>
        <ecNumber evidence="1">4.-.-.-</ecNumber>
    </recommendedName>
</protein>
<gene>
    <name evidence="1" type="primary">cpcT4</name>
    <name type="ordered locus">glr1538</name>
</gene>
<evidence type="ECO:0000255" key="1">
    <source>
        <dbReference type="HAMAP-Rule" id="MF_01460"/>
    </source>
</evidence>
<dbReference type="EC" id="4.-.-.-" evidence="1"/>
<dbReference type="EMBL" id="BA000045">
    <property type="protein sequence ID" value="BAC89479.1"/>
    <property type="molecule type" value="Genomic_DNA"/>
</dbReference>
<dbReference type="RefSeq" id="NP_924484.1">
    <property type="nucleotide sequence ID" value="NC_005125.1"/>
</dbReference>
<dbReference type="RefSeq" id="WP_011141537.1">
    <property type="nucleotide sequence ID" value="NC_005125.1"/>
</dbReference>
<dbReference type="SMR" id="Q7NKE0"/>
<dbReference type="STRING" id="251221.gene:10759027"/>
<dbReference type="EnsemblBacteria" id="BAC89479">
    <property type="protein sequence ID" value="BAC89479"/>
    <property type="gene ID" value="BAC89479"/>
</dbReference>
<dbReference type="KEGG" id="gvi:glr1538"/>
<dbReference type="PATRIC" id="fig|251221.4.peg.1573"/>
<dbReference type="eggNOG" id="ENOG502Z877">
    <property type="taxonomic scope" value="Bacteria"/>
</dbReference>
<dbReference type="HOGENOM" id="CLU_092589_0_0_3"/>
<dbReference type="InParanoid" id="Q7NKE0"/>
<dbReference type="OrthoDB" id="509174at2"/>
<dbReference type="PhylomeDB" id="Q7NKE0"/>
<dbReference type="Proteomes" id="UP000000557">
    <property type="component" value="Chromosome"/>
</dbReference>
<dbReference type="GO" id="GO:0016829">
    <property type="term" value="F:lyase activity"/>
    <property type="evidence" value="ECO:0007669"/>
    <property type="project" value="UniProtKB-KW"/>
</dbReference>
<dbReference type="CDD" id="cd16338">
    <property type="entry name" value="CpcT"/>
    <property type="match status" value="1"/>
</dbReference>
<dbReference type="Gene3D" id="2.40.128.590">
    <property type="entry name" value="CpcT/CpeT domain"/>
    <property type="match status" value="1"/>
</dbReference>
<dbReference type="HAMAP" id="MF_01460">
    <property type="entry name" value="Chrphore_lyase_CpxT"/>
    <property type="match status" value="1"/>
</dbReference>
<dbReference type="InterPro" id="IPR010404">
    <property type="entry name" value="CpcT/CpeT"/>
</dbReference>
<dbReference type="InterPro" id="IPR038672">
    <property type="entry name" value="CpcT/CpeT_sf"/>
</dbReference>
<dbReference type="PANTHER" id="PTHR35137">
    <property type="entry name" value="CHROMOPHORE LYASE CRL, CHLOROPLASTIC"/>
    <property type="match status" value="1"/>
</dbReference>
<dbReference type="PANTHER" id="PTHR35137:SF1">
    <property type="entry name" value="CHROMOPHORE LYASE CRL, CHLOROPLASTIC"/>
    <property type="match status" value="1"/>
</dbReference>
<dbReference type="Pfam" id="PF06206">
    <property type="entry name" value="CpeT"/>
    <property type="match status" value="1"/>
</dbReference>
<reference key="1">
    <citation type="journal article" date="2003" name="DNA Res.">
        <title>Complete genome structure of Gloeobacter violaceus PCC 7421, a cyanobacterium that lacks thylakoids.</title>
        <authorList>
            <person name="Nakamura Y."/>
            <person name="Kaneko T."/>
            <person name="Sato S."/>
            <person name="Mimuro M."/>
            <person name="Miyashita H."/>
            <person name="Tsuchiya T."/>
            <person name="Sasamoto S."/>
            <person name="Watanabe A."/>
            <person name="Kawashima K."/>
            <person name="Kishida Y."/>
            <person name="Kiyokawa C."/>
            <person name="Kohara M."/>
            <person name="Matsumoto M."/>
            <person name="Matsuno A."/>
            <person name="Nakazaki N."/>
            <person name="Shimpo S."/>
            <person name="Takeuchi C."/>
            <person name="Yamada M."/>
            <person name="Tabata S."/>
        </authorList>
    </citation>
    <scope>NUCLEOTIDE SEQUENCE [LARGE SCALE GENOMIC DNA]</scope>
    <source>
        <strain>ATCC 29082 / PCC 7421</strain>
    </source>
</reference>
<sequence>MSDWQTVRTWLAGTYSNRAQAMAEPVWFIPVTLWYVEVAGLFGEGAGFFTEQVSEHTPNQPYRSRVLQLLDNPLRLENYRLKDQKVWAGAAKDPERLGRLRADDCEQLPGCTLYLERRGETFTGKMQPGGGCRLFPGDASYVEIEFELGERLFFTLDRGFEATTGEQTWGSRAGAYRYLKQLH</sequence>